<sequence>MEEFQRYLELDRSQQHYFLYPLIFQEYIYALAHDHGLNINRSILLENAGYDNKFSLLIVKRLIARMYQQNHLILSTNDSNQNRFLRRNKNLYSQMISEGFAVIVEIPFYLQLKSSLESKGIVKSHNLRSIHSIFPFLEDKISHLIYGLEILIPYPVHLEILVQTLRYWVKDASSLHLLRFFLHEYCNWNTPNKAGSSFSKRNQRLFFLLYNSHLCEYESIFIFLRNQSSHLRSTSSGTLLERIYFYGKIKYLVKVFVKAFQVNLLLLKDPFMHYVRYQGKSILASKGTPFLMKKWTYYFVNLWQCHFYLWSQPGRICINQLYNHSLDILGYLSSARLNPSMVRGQMLENSFLIDNAINKFDAIVPIIPLIGSLAKAKFCNVLGHPISKAVWTDLSDSDIIDQFGRICRNLSHYHSGSSQKKSLYRIKYILRLSCARTLARKHKSTVRAFLKRLGSGLLEEFFTAEEQVLYLTFPRASSASQRLYRRRIWYLDIICINDLANHE</sequence>
<protein>
    <recommendedName>
        <fullName evidence="1">Maturase K</fullName>
    </recommendedName>
    <alternativeName>
        <fullName evidence="1">Intron maturase</fullName>
    </alternativeName>
</protein>
<dbReference type="EMBL" id="AB044903">
    <property type="protein sequence ID" value="BAB40299.1"/>
    <property type="molecule type" value="Genomic_DNA"/>
</dbReference>
<dbReference type="EMBL" id="AB087999">
    <property type="protein sequence ID" value="BAC81673.1"/>
    <property type="molecule type" value="Genomic_DNA"/>
</dbReference>
<dbReference type="EMBL" id="AY582139">
    <property type="protein sequence ID" value="AAT98490.1"/>
    <property type="molecule type" value="Genomic_DNA"/>
</dbReference>
<dbReference type="RefSeq" id="YP_086947.1">
    <property type="nucleotide sequence ID" value="NC_006290.1"/>
</dbReference>
<dbReference type="GeneID" id="3021463"/>
<dbReference type="GO" id="GO:0009507">
    <property type="term" value="C:chloroplast"/>
    <property type="evidence" value="ECO:0007669"/>
    <property type="project" value="UniProtKB-SubCell"/>
</dbReference>
<dbReference type="GO" id="GO:0003723">
    <property type="term" value="F:RNA binding"/>
    <property type="evidence" value="ECO:0007669"/>
    <property type="project" value="UniProtKB-KW"/>
</dbReference>
<dbReference type="GO" id="GO:0006397">
    <property type="term" value="P:mRNA processing"/>
    <property type="evidence" value="ECO:0007669"/>
    <property type="project" value="UniProtKB-KW"/>
</dbReference>
<dbReference type="GO" id="GO:0008380">
    <property type="term" value="P:RNA splicing"/>
    <property type="evidence" value="ECO:0007669"/>
    <property type="project" value="UniProtKB-UniRule"/>
</dbReference>
<dbReference type="GO" id="GO:0008033">
    <property type="term" value="P:tRNA processing"/>
    <property type="evidence" value="ECO:0007669"/>
    <property type="project" value="UniProtKB-KW"/>
</dbReference>
<dbReference type="HAMAP" id="MF_01390">
    <property type="entry name" value="MatK"/>
    <property type="match status" value="1"/>
</dbReference>
<dbReference type="InterPro" id="IPR024937">
    <property type="entry name" value="Domain_X"/>
</dbReference>
<dbReference type="InterPro" id="IPR002866">
    <property type="entry name" value="Maturase_MatK"/>
</dbReference>
<dbReference type="InterPro" id="IPR024942">
    <property type="entry name" value="Maturase_MatK_N"/>
</dbReference>
<dbReference type="PANTHER" id="PTHR34811">
    <property type="entry name" value="MATURASE K"/>
    <property type="match status" value="1"/>
</dbReference>
<dbReference type="PANTHER" id="PTHR34811:SF1">
    <property type="entry name" value="MATURASE K"/>
    <property type="match status" value="1"/>
</dbReference>
<dbReference type="Pfam" id="PF01348">
    <property type="entry name" value="Intron_maturas2"/>
    <property type="match status" value="1"/>
</dbReference>
<dbReference type="Pfam" id="PF01824">
    <property type="entry name" value="MatK_N"/>
    <property type="match status" value="1"/>
</dbReference>
<accession>Q9AVL5</accession>
<accession>Q7YIY9</accession>
<accession>Q9AVL3</accession>
<feature type="chain" id="PRO_0000143573" description="Maturase K">
    <location>
        <begin position="1"/>
        <end position="503"/>
    </location>
</feature>
<gene>
    <name evidence="1" type="primary">matK</name>
    <name type="ORF">PSC0020</name>
</gene>
<organism>
    <name type="scientific">Panax ginseng</name>
    <name type="common">Korean ginseng</name>
    <dbReference type="NCBI Taxonomy" id="4054"/>
    <lineage>
        <taxon>Eukaryota</taxon>
        <taxon>Viridiplantae</taxon>
        <taxon>Streptophyta</taxon>
        <taxon>Embryophyta</taxon>
        <taxon>Tracheophyta</taxon>
        <taxon>Spermatophyta</taxon>
        <taxon>Magnoliopsida</taxon>
        <taxon>eudicotyledons</taxon>
        <taxon>Gunneridae</taxon>
        <taxon>Pentapetalae</taxon>
        <taxon>asterids</taxon>
        <taxon>campanulids</taxon>
        <taxon>Apiales</taxon>
        <taxon>Araliaceae</taxon>
        <taxon>Panax</taxon>
    </lineage>
</organism>
<keyword id="KW-0150">Chloroplast</keyword>
<keyword id="KW-0507">mRNA processing</keyword>
<keyword id="KW-0934">Plastid</keyword>
<keyword id="KW-0694">RNA-binding</keyword>
<keyword id="KW-0819">tRNA processing</keyword>
<reference key="1">
    <citation type="journal article" date="2001" name="Planta Med.">
        <title>Phylogenetic analysis based on 18S rRNA gene and matK gene sequences of Panax vietnamensis and five related species.</title>
        <authorList>
            <person name="Komatsu K."/>
            <person name="Zhu S."/>
            <person name="Fushimi H."/>
            <person name="Qui T.K."/>
            <person name="Cai S."/>
            <person name="Kadota S."/>
        </authorList>
    </citation>
    <scope>NUCLEOTIDE SEQUENCE [GENOMIC DNA]</scope>
</reference>
<reference key="2">
    <citation type="journal article" date="2003" name="Planta Med.">
        <title>Phylogenetic relationship in genus Panax: inferred from chloroplast trnK gene and nuclear 18S rRNA gene sequences.</title>
        <authorList>
            <person name="Zhu S."/>
            <person name="Fushimi H."/>
            <person name="Cai S."/>
            <person name="Komatsu K."/>
        </authorList>
    </citation>
    <scope>NUCLEOTIDE SEQUENCE [GENOMIC DNA]</scope>
</reference>
<reference key="3">
    <citation type="journal article" date="2004" name="DNA Res.">
        <title>Complete chloroplast genome sequence from Korea ginseng (Panax schinseng Nees) and comparative analysis of sequence evolution among 17 vascular plants.</title>
        <authorList>
            <person name="Kim K.-J."/>
            <person name="Lee H.-L."/>
        </authorList>
    </citation>
    <scope>NUCLEOTIDE SEQUENCE [LARGE SCALE GENOMIC DNA]</scope>
</reference>
<evidence type="ECO:0000255" key="1">
    <source>
        <dbReference type="HAMAP-Rule" id="MF_01390"/>
    </source>
</evidence>
<comment type="function">
    <text evidence="1">Usually encoded in the trnK tRNA gene intron. Probably assists in splicing its own and other chloroplast group II introns.</text>
</comment>
<comment type="subcellular location">
    <subcellularLocation>
        <location>Plastid</location>
        <location>Chloroplast</location>
    </subcellularLocation>
</comment>
<comment type="similarity">
    <text evidence="1">Belongs to the intron maturase 2 family. MatK subfamily.</text>
</comment>
<proteinExistence type="inferred from homology"/>
<name>MATK_PANGI</name>
<geneLocation type="chloroplast"/>